<evidence type="ECO:0000250" key="1"/>
<evidence type="ECO:0000255" key="2">
    <source>
        <dbReference type="HAMAP-Rule" id="MF_00127"/>
    </source>
</evidence>
<comment type="catalytic activity">
    <reaction evidence="2">
        <text>tRNA(His) + L-histidine + ATP = L-histidyl-tRNA(His) + AMP + diphosphate + H(+)</text>
        <dbReference type="Rhea" id="RHEA:17313"/>
        <dbReference type="Rhea" id="RHEA-COMP:9665"/>
        <dbReference type="Rhea" id="RHEA-COMP:9689"/>
        <dbReference type="ChEBI" id="CHEBI:15378"/>
        <dbReference type="ChEBI" id="CHEBI:30616"/>
        <dbReference type="ChEBI" id="CHEBI:33019"/>
        <dbReference type="ChEBI" id="CHEBI:57595"/>
        <dbReference type="ChEBI" id="CHEBI:78442"/>
        <dbReference type="ChEBI" id="CHEBI:78527"/>
        <dbReference type="ChEBI" id="CHEBI:456215"/>
        <dbReference type="EC" id="6.1.1.21"/>
    </reaction>
</comment>
<comment type="subunit">
    <text evidence="2">Homodimer.</text>
</comment>
<comment type="subcellular location">
    <subcellularLocation>
        <location evidence="2">Cytoplasm</location>
    </subcellularLocation>
</comment>
<comment type="similarity">
    <text evidence="2">Belongs to the class-II aminoacyl-tRNA synthetase family.</text>
</comment>
<name>SYH_STRPQ</name>
<proteinExistence type="inferred from homology"/>
<sequence>MKLQKPKGTQDILPGDAAKWQYVESVARDTFSQYNYGEIRTPMFEHYEVISRSVGDTTDIVTKEMYDFYDKGDRHITLRPEGTAPVVRSYVENKLFAPEVQKPVKLYYIGSMFRYERPQAGRLREFHQIGVECFGAANPATDVETIAMAYHLFEKLGIKDVTLHLNSLGSPESRSAYRQALIDYLTPMRDQLSKDSQRRLDENPLRVLDSKEKEDKLAVEKAPSILDYLDEESQAHFEAVKAMLEALDIPYVIDTNMVRGLDYYNHTIFEFITSVEGSDLTICAGGRYDSLVGYFGGPETPGFGFGLGLERLLMVIEKQGITLPIETEMDVYLAVLGDGANSKALELVQAIRRQGFTAERDYLGRKIKAQFKSADTFKAKLVMTLGESEVEAGKAVIKNNRSRQEVEVSFEDMMTNFANISEQLLS</sequence>
<keyword id="KW-0030">Aminoacyl-tRNA synthetase</keyword>
<keyword id="KW-0067">ATP-binding</keyword>
<keyword id="KW-0963">Cytoplasm</keyword>
<keyword id="KW-0436">Ligase</keyword>
<keyword id="KW-0547">Nucleotide-binding</keyword>
<keyword id="KW-0648">Protein biosynthesis</keyword>
<accession>P0DG41</accession>
<accession>Q8K5I9</accession>
<gene>
    <name evidence="2" type="primary">hisS</name>
    <name type="ordered locus">SPs1813</name>
</gene>
<protein>
    <recommendedName>
        <fullName evidence="2">Histidine--tRNA ligase</fullName>
        <ecNumber evidence="2">6.1.1.21</ecNumber>
    </recommendedName>
    <alternativeName>
        <fullName evidence="2">Histidyl-tRNA synthetase</fullName>
        <shortName evidence="2">HisRS</shortName>
    </alternativeName>
</protein>
<reference key="1">
    <citation type="journal article" date="2003" name="Genome Res.">
        <title>Genome sequence of an M3 strain of Streptococcus pyogenes reveals a large-scale genomic rearrangement in invasive strains and new insights into phage evolution.</title>
        <authorList>
            <person name="Nakagawa I."/>
            <person name="Kurokawa K."/>
            <person name="Yamashita A."/>
            <person name="Nakata M."/>
            <person name="Tomiyasu Y."/>
            <person name="Okahashi N."/>
            <person name="Kawabata S."/>
            <person name="Yamazaki K."/>
            <person name="Shiba T."/>
            <person name="Yasunaga T."/>
            <person name="Hayashi H."/>
            <person name="Hattori M."/>
            <person name="Hamada S."/>
        </authorList>
    </citation>
    <scope>NUCLEOTIDE SEQUENCE [LARGE SCALE GENOMIC DNA]</scope>
    <source>
        <strain>SSI-1</strain>
    </source>
</reference>
<dbReference type="EC" id="6.1.1.21" evidence="2"/>
<dbReference type="EMBL" id="BA000034">
    <property type="protein sequence ID" value="BAC64908.1"/>
    <property type="molecule type" value="Genomic_DNA"/>
</dbReference>
<dbReference type="RefSeq" id="WP_011055096.1">
    <property type="nucleotide sequence ID" value="NC_004606.1"/>
</dbReference>
<dbReference type="SMR" id="P0DG41"/>
<dbReference type="KEGG" id="sps:SPs1813"/>
<dbReference type="HOGENOM" id="CLU_025113_1_1_9"/>
<dbReference type="GO" id="GO:0005737">
    <property type="term" value="C:cytoplasm"/>
    <property type="evidence" value="ECO:0007669"/>
    <property type="project" value="UniProtKB-SubCell"/>
</dbReference>
<dbReference type="GO" id="GO:0005524">
    <property type="term" value="F:ATP binding"/>
    <property type="evidence" value="ECO:0007669"/>
    <property type="project" value="UniProtKB-UniRule"/>
</dbReference>
<dbReference type="GO" id="GO:0140096">
    <property type="term" value="F:catalytic activity, acting on a protein"/>
    <property type="evidence" value="ECO:0007669"/>
    <property type="project" value="UniProtKB-ARBA"/>
</dbReference>
<dbReference type="GO" id="GO:0004821">
    <property type="term" value="F:histidine-tRNA ligase activity"/>
    <property type="evidence" value="ECO:0007669"/>
    <property type="project" value="UniProtKB-UniRule"/>
</dbReference>
<dbReference type="GO" id="GO:0016740">
    <property type="term" value="F:transferase activity"/>
    <property type="evidence" value="ECO:0007669"/>
    <property type="project" value="UniProtKB-ARBA"/>
</dbReference>
<dbReference type="GO" id="GO:0006427">
    <property type="term" value="P:histidyl-tRNA aminoacylation"/>
    <property type="evidence" value="ECO:0007669"/>
    <property type="project" value="UniProtKB-UniRule"/>
</dbReference>
<dbReference type="CDD" id="cd00773">
    <property type="entry name" value="HisRS-like_core"/>
    <property type="match status" value="1"/>
</dbReference>
<dbReference type="CDD" id="cd00859">
    <property type="entry name" value="HisRS_anticodon"/>
    <property type="match status" value="1"/>
</dbReference>
<dbReference type="FunFam" id="3.30.930.10:FF:000005">
    <property type="entry name" value="Histidine--tRNA ligase"/>
    <property type="match status" value="1"/>
</dbReference>
<dbReference type="Gene3D" id="3.40.50.800">
    <property type="entry name" value="Anticodon-binding domain"/>
    <property type="match status" value="1"/>
</dbReference>
<dbReference type="Gene3D" id="3.30.930.10">
    <property type="entry name" value="Bira Bifunctional Protein, Domain 2"/>
    <property type="match status" value="1"/>
</dbReference>
<dbReference type="HAMAP" id="MF_00127">
    <property type="entry name" value="His_tRNA_synth"/>
    <property type="match status" value="1"/>
</dbReference>
<dbReference type="InterPro" id="IPR006195">
    <property type="entry name" value="aa-tRNA-synth_II"/>
</dbReference>
<dbReference type="InterPro" id="IPR045864">
    <property type="entry name" value="aa-tRNA-synth_II/BPL/LPL"/>
</dbReference>
<dbReference type="InterPro" id="IPR004154">
    <property type="entry name" value="Anticodon-bd"/>
</dbReference>
<dbReference type="InterPro" id="IPR036621">
    <property type="entry name" value="Anticodon-bd_dom_sf"/>
</dbReference>
<dbReference type="InterPro" id="IPR015807">
    <property type="entry name" value="His-tRNA-ligase"/>
</dbReference>
<dbReference type="InterPro" id="IPR041715">
    <property type="entry name" value="HisRS-like_core"/>
</dbReference>
<dbReference type="InterPro" id="IPR004516">
    <property type="entry name" value="HisRS/HisZ"/>
</dbReference>
<dbReference type="InterPro" id="IPR033656">
    <property type="entry name" value="HisRS_anticodon"/>
</dbReference>
<dbReference type="NCBIfam" id="TIGR00442">
    <property type="entry name" value="hisS"/>
    <property type="match status" value="1"/>
</dbReference>
<dbReference type="PANTHER" id="PTHR43707:SF1">
    <property type="entry name" value="HISTIDINE--TRNA LIGASE, MITOCHONDRIAL-RELATED"/>
    <property type="match status" value="1"/>
</dbReference>
<dbReference type="PANTHER" id="PTHR43707">
    <property type="entry name" value="HISTIDYL-TRNA SYNTHETASE"/>
    <property type="match status" value="1"/>
</dbReference>
<dbReference type="Pfam" id="PF03129">
    <property type="entry name" value="HGTP_anticodon"/>
    <property type="match status" value="1"/>
</dbReference>
<dbReference type="Pfam" id="PF13393">
    <property type="entry name" value="tRNA-synt_His"/>
    <property type="match status" value="1"/>
</dbReference>
<dbReference type="PIRSF" id="PIRSF001549">
    <property type="entry name" value="His-tRNA_synth"/>
    <property type="match status" value="1"/>
</dbReference>
<dbReference type="SUPFAM" id="SSF52954">
    <property type="entry name" value="Class II aaRS ABD-related"/>
    <property type="match status" value="1"/>
</dbReference>
<dbReference type="SUPFAM" id="SSF55681">
    <property type="entry name" value="Class II aaRS and biotin synthetases"/>
    <property type="match status" value="1"/>
</dbReference>
<dbReference type="PROSITE" id="PS50862">
    <property type="entry name" value="AA_TRNA_LIGASE_II"/>
    <property type="match status" value="1"/>
</dbReference>
<feature type="initiator methionine" description="Removed" evidence="1">
    <location>
        <position position="1"/>
    </location>
</feature>
<feature type="chain" id="PRO_0000411610" description="Histidine--tRNA ligase">
    <location>
        <begin position="2"/>
        <end position="426"/>
    </location>
</feature>
<organism>
    <name type="scientific">Streptococcus pyogenes serotype M3 (strain SSI-1)</name>
    <dbReference type="NCBI Taxonomy" id="193567"/>
    <lineage>
        <taxon>Bacteria</taxon>
        <taxon>Bacillati</taxon>
        <taxon>Bacillota</taxon>
        <taxon>Bacilli</taxon>
        <taxon>Lactobacillales</taxon>
        <taxon>Streptococcaceae</taxon>
        <taxon>Streptococcus</taxon>
    </lineage>
</organism>